<comment type="similarity">
    <text evidence="1">Belongs to the bacterial ribosomal protein bL32 family.</text>
</comment>
<proteinExistence type="inferred from homology"/>
<name>RL32_MYCSS</name>
<feature type="chain" id="PRO_0000296508" description="Large ribosomal subunit protein bL32">
    <location>
        <begin position="1"/>
        <end position="57"/>
    </location>
</feature>
<feature type="region of interest" description="Disordered" evidence="2">
    <location>
        <begin position="1"/>
        <end position="22"/>
    </location>
</feature>
<feature type="compositionally biased region" description="Basic residues" evidence="2">
    <location>
        <begin position="1"/>
        <end position="20"/>
    </location>
</feature>
<accession>Q1B3X7</accession>
<evidence type="ECO:0000255" key="1">
    <source>
        <dbReference type="HAMAP-Rule" id="MF_00340"/>
    </source>
</evidence>
<evidence type="ECO:0000256" key="2">
    <source>
        <dbReference type="SAM" id="MobiDB-lite"/>
    </source>
</evidence>
<evidence type="ECO:0000305" key="3"/>
<gene>
    <name evidence="1" type="primary">rpmF</name>
    <name type="ordered locus">Mmcs_4302</name>
</gene>
<organism>
    <name type="scientific">Mycobacterium sp. (strain MCS)</name>
    <dbReference type="NCBI Taxonomy" id="164756"/>
    <lineage>
        <taxon>Bacteria</taxon>
        <taxon>Bacillati</taxon>
        <taxon>Actinomycetota</taxon>
        <taxon>Actinomycetes</taxon>
        <taxon>Mycobacteriales</taxon>
        <taxon>Mycobacteriaceae</taxon>
        <taxon>Mycobacterium</taxon>
    </lineage>
</organism>
<dbReference type="EMBL" id="CP000384">
    <property type="protein sequence ID" value="ABG10407.1"/>
    <property type="molecule type" value="Genomic_DNA"/>
</dbReference>
<dbReference type="SMR" id="Q1B3X7"/>
<dbReference type="KEGG" id="mmc:Mmcs_4302"/>
<dbReference type="HOGENOM" id="CLU_203263_0_0_11"/>
<dbReference type="BioCyc" id="MSP164756:G1G6O-4395-MONOMER"/>
<dbReference type="GO" id="GO:0015934">
    <property type="term" value="C:large ribosomal subunit"/>
    <property type="evidence" value="ECO:0007669"/>
    <property type="project" value="InterPro"/>
</dbReference>
<dbReference type="GO" id="GO:0003735">
    <property type="term" value="F:structural constituent of ribosome"/>
    <property type="evidence" value="ECO:0007669"/>
    <property type="project" value="InterPro"/>
</dbReference>
<dbReference type="GO" id="GO:0006412">
    <property type="term" value="P:translation"/>
    <property type="evidence" value="ECO:0007669"/>
    <property type="project" value="UniProtKB-UniRule"/>
</dbReference>
<dbReference type="HAMAP" id="MF_00340">
    <property type="entry name" value="Ribosomal_bL32"/>
    <property type="match status" value="1"/>
</dbReference>
<dbReference type="InterPro" id="IPR002677">
    <property type="entry name" value="Ribosomal_bL32"/>
</dbReference>
<dbReference type="InterPro" id="IPR011332">
    <property type="entry name" value="Ribosomal_zn-bd"/>
</dbReference>
<dbReference type="NCBIfam" id="TIGR01031">
    <property type="entry name" value="rpmF_bact"/>
    <property type="match status" value="1"/>
</dbReference>
<dbReference type="Pfam" id="PF01783">
    <property type="entry name" value="Ribosomal_L32p"/>
    <property type="match status" value="1"/>
</dbReference>
<dbReference type="SUPFAM" id="SSF57829">
    <property type="entry name" value="Zn-binding ribosomal proteins"/>
    <property type="match status" value="1"/>
</dbReference>
<protein>
    <recommendedName>
        <fullName evidence="1">Large ribosomal subunit protein bL32</fullName>
    </recommendedName>
    <alternativeName>
        <fullName evidence="3">50S ribosomal protein L32</fullName>
    </alternativeName>
</protein>
<sequence length="57" mass="6562">MAVPKRRMSRSNTRSRRAQWKAKPTELVGVTVAGQQHKVPRRLLKAARLGLIDLDRR</sequence>
<reference key="1">
    <citation type="submission" date="2006-06" db="EMBL/GenBank/DDBJ databases">
        <title>Complete sequence of chromosome of Mycobacterium sp. MCS.</title>
        <authorList>
            <consortium name="US DOE Joint Genome Institute"/>
            <person name="Copeland A."/>
            <person name="Lucas S."/>
            <person name="Lapidus A."/>
            <person name="Barry K."/>
            <person name="Detter J.C."/>
            <person name="Glavina del Rio T."/>
            <person name="Hammon N."/>
            <person name="Israni S."/>
            <person name="Dalin E."/>
            <person name="Tice H."/>
            <person name="Pitluck S."/>
            <person name="Martinez M."/>
            <person name="Schmutz J."/>
            <person name="Larimer F."/>
            <person name="Land M."/>
            <person name="Hauser L."/>
            <person name="Kyrpides N."/>
            <person name="Kim E."/>
            <person name="Miller C.D."/>
            <person name="Hughes J.E."/>
            <person name="Anderson A.J."/>
            <person name="Sims R.C."/>
            <person name="Richardson P."/>
        </authorList>
    </citation>
    <scope>NUCLEOTIDE SEQUENCE [LARGE SCALE GENOMIC DNA]</scope>
    <source>
        <strain>MCS</strain>
    </source>
</reference>
<keyword id="KW-0687">Ribonucleoprotein</keyword>
<keyword id="KW-0689">Ribosomal protein</keyword>